<name>OBG_CAMJD</name>
<feature type="chain" id="PRO_0000385804" description="GTPase Obg">
    <location>
        <begin position="1"/>
        <end position="345"/>
    </location>
</feature>
<feature type="domain" description="Obg" evidence="2">
    <location>
        <begin position="1"/>
        <end position="158"/>
    </location>
</feature>
<feature type="domain" description="OBG-type G" evidence="1">
    <location>
        <begin position="159"/>
        <end position="339"/>
    </location>
</feature>
<feature type="binding site" evidence="1">
    <location>
        <begin position="165"/>
        <end position="172"/>
    </location>
    <ligand>
        <name>GTP</name>
        <dbReference type="ChEBI" id="CHEBI:37565"/>
    </ligand>
</feature>
<feature type="binding site" evidence="1">
    <location>
        <position position="172"/>
    </location>
    <ligand>
        <name>Mg(2+)</name>
        <dbReference type="ChEBI" id="CHEBI:18420"/>
    </ligand>
</feature>
<feature type="binding site" evidence="1">
    <location>
        <begin position="190"/>
        <end position="194"/>
    </location>
    <ligand>
        <name>GTP</name>
        <dbReference type="ChEBI" id="CHEBI:37565"/>
    </ligand>
</feature>
<feature type="binding site" evidence="1">
    <location>
        <position position="192"/>
    </location>
    <ligand>
        <name>Mg(2+)</name>
        <dbReference type="ChEBI" id="CHEBI:18420"/>
    </ligand>
</feature>
<feature type="binding site" evidence="1">
    <location>
        <begin position="212"/>
        <end position="215"/>
    </location>
    <ligand>
        <name>GTP</name>
        <dbReference type="ChEBI" id="CHEBI:37565"/>
    </ligand>
</feature>
<feature type="binding site" evidence="1">
    <location>
        <begin position="280"/>
        <end position="283"/>
    </location>
    <ligand>
        <name>GTP</name>
        <dbReference type="ChEBI" id="CHEBI:37565"/>
    </ligand>
</feature>
<feature type="binding site" evidence="1">
    <location>
        <begin position="320"/>
        <end position="322"/>
    </location>
    <ligand>
        <name>GTP</name>
        <dbReference type="ChEBI" id="CHEBI:37565"/>
    </ligand>
</feature>
<dbReference type="EC" id="3.6.5.-" evidence="1"/>
<dbReference type="EMBL" id="CP000768">
    <property type="protein sequence ID" value="ABS44735.1"/>
    <property type="molecule type" value="Genomic_DNA"/>
</dbReference>
<dbReference type="SMR" id="A7H1H0"/>
<dbReference type="KEGG" id="cjd:JJD26997_0100"/>
<dbReference type="HOGENOM" id="CLU_011747_2_0_7"/>
<dbReference type="Proteomes" id="UP000002302">
    <property type="component" value="Chromosome"/>
</dbReference>
<dbReference type="GO" id="GO:0005737">
    <property type="term" value="C:cytoplasm"/>
    <property type="evidence" value="ECO:0007669"/>
    <property type="project" value="UniProtKB-SubCell"/>
</dbReference>
<dbReference type="GO" id="GO:0005525">
    <property type="term" value="F:GTP binding"/>
    <property type="evidence" value="ECO:0007669"/>
    <property type="project" value="UniProtKB-UniRule"/>
</dbReference>
<dbReference type="GO" id="GO:0003924">
    <property type="term" value="F:GTPase activity"/>
    <property type="evidence" value="ECO:0007669"/>
    <property type="project" value="UniProtKB-UniRule"/>
</dbReference>
<dbReference type="GO" id="GO:0000287">
    <property type="term" value="F:magnesium ion binding"/>
    <property type="evidence" value="ECO:0007669"/>
    <property type="project" value="InterPro"/>
</dbReference>
<dbReference type="GO" id="GO:0042254">
    <property type="term" value="P:ribosome biogenesis"/>
    <property type="evidence" value="ECO:0007669"/>
    <property type="project" value="UniProtKB-UniRule"/>
</dbReference>
<dbReference type="CDD" id="cd01898">
    <property type="entry name" value="Obg"/>
    <property type="match status" value="1"/>
</dbReference>
<dbReference type="FunFam" id="2.70.210.12:FF:000001">
    <property type="entry name" value="GTPase Obg"/>
    <property type="match status" value="1"/>
</dbReference>
<dbReference type="Gene3D" id="2.70.210.12">
    <property type="entry name" value="GTP1/OBG domain"/>
    <property type="match status" value="1"/>
</dbReference>
<dbReference type="Gene3D" id="3.40.50.300">
    <property type="entry name" value="P-loop containing nucleotide triphosphate hydrolases"/>
    <property type="match status" value="1"/>
</dbReference>
<dbReference type="HAMAP" id="MF_01454">
    <property type="entry name" value="GTPase_Obg"/>
    <property type="match status" value="1"/>
</dbReference>
<dbReference type="InterPro" id="IPR031167">
    <property type="entry name" value="G_OBG"/>
</dbReference>
<dbReference type="InterPro" id="IPR006073">
    <property type="entry name" value="GTP-bd"/>
</dbReference>
<dbReference type="InterPro" id="IPR014100">
    <property type="entry name" value="GTP-bd_Obg/CgtA"/>
</dbReference>
<dbReference type="InterPro" id="IPR006074">
    <property type="entry name" value="GTP1-OBG_CS"/>
</dbReference>
<dbReference type="InterPro" id="IPR006169">
    <property type="entry name" value="GTP1_OBG_dom"/>
</dbReference>
<dbReference type="InterPro" id="IPR036726">
    <property type="entry name" value="GTP1_OBG_dom_sf"/>
</dbReference>
<dbReference type="InterPro" id="IPR045086">
    <property type="entry name" value="OBG_GTPase"/>
</dbReference>
<dbReference type="InterPro" id="IPR027417">
    <property type="entry name" value="P-loop_NTPase"/>
</dbReference>
<dbReference type="NCBIfam" id="TIGR02729">
    <property type="entry name" value="Obg_CgtA"/>
    <property type="match status" value="1"/>
</dbReference>
<dbReference type="NCBIfam" id="NF008955">
    <property type="entry name" value="PRK12297.1"/>
    <property type="match status" value="1"/>
</dbReference>
<dbReference type="NCBIfam" id="NF008956">
    <property type="entry name" value="PRK12299.1"/>
    <property type="match status" value="1"/>
</dbReference>
<dbReference type="PANTHER" id="PTHR11702">
    <property type="entry name" value="DEVELOPMENTALLY REGULATED GTP-BINDING PROTEIN-RELATED"/>
    <property type="match status" value="1"/>
</dbReference>
<dbReference type="PANTHER" id="PTHR11702:SF31">
    <property type="entry name" value="MITOCHONDRIAL RIBOSOME-ASSOCIATED GTPASE 2"/>
    <property type="match status" value="1"/>
</dbReference>
<dbReference type="Pfam" id="PF01018">
    <property type="entry name" value="GTP1_OBG"/>
    <property type="match status" value="1"/>
</dbReference>
<dbReference type="Pfam" id="PF01926">
    <property type="entry name" value="MMR_HSR1"/>
    <property type="match status" value="1"/>
</dbReference>
<dbReference type="PIRSF" id="PIRSF002401">
    <property type="entry name" value="GTP_bd_Obg/CgtA"/>
    <property type="match status" value="1"/>
</dbReference>
<dbReference type="PRINTS" id="PR00326">
    <property type="entry name" value="GTP1OBG"/>
</dbReference>
<dbReference type="SUPFAM" id="SSF82051">
    <property type="entry name" value="Obg GTP-binding protein N-terminal domain"/>
    <property type="match status" value="1"/>
</dbReference>
<dbReference type="SUPFAM" id="SSF52540">
    <property type="entry name" value="P-loop containing nucleoside triphosphate hydrolases"/>
    <property type="match status" value="1"/>
</dbReference>
<dbReference type="PROSITE" id="PS51710">
    <property type="entry name" value="G_OBG"/>
    <property type="match status" value="1"/>
</dbReference>
<dbReference type="PROSITE" id="PS00905">
    <property type="entry name" value="GTP1_OBG"/>
    <property type="match status" value="1"/>
</dbReference>
<dbReference type="PROSITE" id="PS51883">
    <property type="entry name" value="OBG"/>
    <property type="match status" value="1"/>
</dbReference>
<comment type="function">
    <text evidence="1">An essential GTPase which binds GTP, GDP and possibly (p)ppGpp with moderate affinity, with high nucleotide exchange rates and a fairly low GTP hydrolysis rate. Plays a role in control of the cell cycle, stress response, ribosome biogenesis and in those bacteria that undergo differentiation, in morphogenesis control.</text>
</comment>
<comment type="cofactor">
    <cofactor evidence="1">
        <name>Mg(2+)</name>
        <dbReference type="ChEBI" id="CHEBI:18420"/>
    </cofactor>
</comment>
<comment type="subunit">
    <text evidence="1">Monomer.</text>
</comment>
<comment type="subcellular location">
    <subcellularLocation>
        <location evidence="1">Cytoplasm</location>
    </subcellularLocation>
</comment>
<comment type="similarity">
    <text evidence="1">Belongs to the TRAFAC class OBG-HflX-like GTPase superfamily. OBG GTPase family.</text>
</comment>
<sequence>MFIDSVKITLASGDGGKGAVSFRREKHVPLGGPDGGDGGNGGDIIFICDNNTHTLVNFKGKRELRAQNGAGGMGRNKNGKKGENLELVVPEGTQVIDAQTNEILLDLTKEGQRELFLKGGKGGLGNTHFKHATNQRPDYAQPGIKGESRLVRLELKLIADVGLVGFPNVGKSTLISVVSNAKPEIANYEFTTLTPKLGLVDVDEYNSFVMTDIPGIIQGASGGKGLGLAFLKHIERTSFLLFVLDPMREMLLKEQFIVLRKELEKFSDELFGRKFGIMISKSDSVNLGEEFAEQIALNINELENYLKEINNPQSFLIKVSSLEKTGLKELKFMLLEEIKALRNNK</sequence>
<organism>
    <name type="scientific">Campylobacter jejuni subsp. doylei (strain ATCC BAA-1458 / RM4099 / 269.97)</name>
    <dbReference type="NCBI Taxonomy" id="360109"/>
    <lineage>
        <taxon>Bacteria</taxon>
        <taxon>Pseudomonadati</taxon>
        <taxon>Campylobacterota</taxon>
        <taxon>Epsilonproteobacteria</taxon>
        <taxon>Campylobacterales</taxon>
        <taxon>Campylobacteraceae</taxon>
        <taxon>Campylobacter</taxon>
    </lineage>
</organism>
<proteinExistence type="inferred from homology"/>
<keyword id="KW-0963">Cytoplasm</keyword>
<keyword id="KW-0342">GTP-binding</keyword>
<keyword id="KW-0378">Hydrolase</keyword>
<keyword id="KW-0460">Magnesium</keyword>
<keyword id="KW-0479">Metal-binding</keyword>
<keyword id="KW-0547">Nucleotide-binding</keyword>
<accession>A7H1H0</accession>
<reference key="1">
    <citation type="submission" date="2007-07" db="EMBL/GenBank/DDBJ databases">
        <title>Complete genome sequence of Campylobacter jejuni subsp doylei 269.97 isolated from human blood.</title>
        <authorList>
            <person name="Fouts D.E."/>
            <person name="Mongodin E.F."/>
            <person name="Puiu D."/>
            <person name="Sebastian Y."/>
            <person name="Miller W.G."/>
            <person name="Mandrell R.E."/>
            <person name="Lastovica A.J."/>
            <person name="Nelson K.E."/>
        </authorList>
    </citation>
    <scope>NUCLEOTIDE SEQUENCE [LARGE SCALE GENOMIC DNA]</scope>
    <source>
        <strain>ATCC BAA-1458 / RM4099 / 269.97</strain>
    </source>
</reference>
<protein>
    <recommendedName>
        <fullName evidence="1">GTPase Obg</fullName>
        <ecNumber evidence="1">3.6.5.-</ecNumber>
    </recommendedName>
    <alternativeName>
        <fullName evidence="1">GTP-binding protein Obg</fullName>
    </alternativeName>
</protein>
<gene>
    <name evidence="1" type="primary">obg</name>
    <name type="ordered locus">JJD26997_0100</name>
</gene>
<evidence type="ECO:0000255" key="1">
    <source>
        <dbReference type="HAMAP-Rule" id="MF_01454"/>
    </source>
</evidence>
<evidence type="ECO:0000255" key="2">
    <source>
        <dbReference type="PROSITE-ProRule" id="PRU01231"/>
    </source>
</evidence>